<organism>
    <name type="scientific">Thermotoga petrophila (strain ATCC BAA-488 / DSM 13995 / JCM 10881 / RKU-1)</name>
    <dbReference type="NCBI Taxonomy" id="390874"/>
    <lineage>
        <taxon>Bacteria</taxon>
        <taxon>Thermotogati</taxon>
        <taxon>Thermotogota</taxon>
        <taxon>Thermotogae</taxon>
        <taxon>Thermotogales</taxon>
        <taxon>Thermotogaceae</taxon>
        <taxon>Thermotoga</taxon>
    </lineage>
</organism>
<comment type="function">
    <text evidence="1">Catalyzes the formation of 6,7-dimethyl-8-ribityllumazine by condensation of 5-amino-6-(D-ribitylamino)uracil with 3,4-dihydroxy-2-butanone 4-phosphate. This is the penultimate step in the biosynthesis of riboflavin.</text>
</comment>
<comment type="catalytic activity">
    <reaction evidence="1">
        <text>(2S)-2-hydroxy-3-oxobutyl phosphate + 5-amino-6-(D-ribitylamino)uracil = 6,7-dimethyl-8-(1-D-ribityl)lumazine + phosphate + 2 H2O + H(+)</text>
        <dbReference type="Rhea" id="RHEA:26152"/>
        <dbReference type="ChEBI" id="CHEBI:15377"/>
        <dbReference type="ChEBI" id="CHEBI:15378"/>
        <dbReference type="ChEBI" id="CHEBI:15934"/>
        <dbReference type="ChEBI" id="CHEBI:43474"/>
        <dbReference type="ChEBI" id="CHEBI:58201"/>
        <dbReference type="ChEBI" id="CHEBI:58830"/>
        <dbReference type="EC" id="2.5.1.78"/>
    </reaction>
</comment>
<comment type="pathway">
    <text evidence="1">Cofactor biosynthesis; riboflavin biosynthesis; riboflavin from 2-hydroxy-3-oxobutyl phosphate and 5-amino-6-(D-ribitylamino)uracil: step 1/2.</text>
</comment>
<comment type="similarity">
    <text evidence="1">Belongs to the DMRL synthase family.</text>
</comment>
<name>RISB_THEP1</name>
<evidence type="ECO:0000255" key="1">
    <source>
        <dbReference type="HAMAP-Rule" id="MF_00178"/>
    </source>
</evidence>
<accession>A5ILQ1</accession>
<protein>
    <recommendedName>
        <fullName evidence="1">6,7-dimethyl-8-ribityllumazine synthase</fullName>
        <shortName evidence="1">DMRL synthase</shortName>
        <shortName evidence="1">LS</shortName>
        <shortName evidence="1">Lumazine synthase</shortName>
        <ecNumber evidence="1">2.5.1.78</ecNumber>
    </recommendedName>
</protein>
<dbReference type="EC" id="2.5.1.78" evidence="1"/>
<dbReference type="EMBL" id="CP000702">
    <property type="protein sequence ID" value="ABQ47124.1"/>
    <property type="molecule type" value="Genomic_DNA"/>
</dbReference>
<dbReference type="RefSeq" id="WP_011943644.1">
    <property type="nucleotide sequence ID" value="NC_009486.1"/>
</dbReference>
<dbReference type="SMR" id="A5ILQ1"/>
<dbReference type="STRING" id="390874.Tpet_1110"/>
<dbReference type="KEGG" id="tpt:Tpet_1110"/>
<dbReference type="eggNOG" id="COG0054">
    <property type="taxonomic scope" value="Bacteria"/>
</dbReference>
<dbReference type="HOGENOM" id="CLU_089358_1_1_0"/>
<dbReference type="UniPathway" id="UPA00275">
    <property type="reaction ID" value="UER00404"/>
</dbReference>
<dbReference type="Proteomes" id="UP000006558">
    <property type="component" value="Chromosome"/>
</dbReference>
<dbReference type="GO" id="GO:0005829">
    <property type="term" value="C:cytosol"/>
    <property type="evidence" value="ECO:0007669"/>
    <property type="project" value="TreeGrafter"/>
</dbReference>
<dbReference type="GO" id="GO:0009349">
    <property type="term" value="C:riboflavin synthase complex"/>
    <property type="evidence" value="ECO:0007669"/>
    <property type="project" value="InterPro"/>
</dbReference>
<dbReference type="GO" id="GO:0000906">
    <property type="term" value="F:6,7-dimethyl-8-ribityllumazine synthase activity"/>
    <property type="evidence" value="ECO:0007669"/>
    <property type="project" value="UniProtKB-UniRule"/>
</dbReference>
<dbReference type="GO" id="GO:0009231">
    <property type="term" value="P:riboflavin biosynthetic process"/>
    <property type="evidence" value="ECO:0007669"/>
    <property type="project" value="UniProtKB-UniRule"/>
</dbReference>
<dbReference type="CDD" id="cd09209">
    <property type="entry name" value="Lumazine_synthase-I"/>
    <property type="match status" value="1"/>
</dbReference>
<dbReference type="FunFam" id="3.40.50.960:FF:000001">
    <property type="entry name" value="6,7-dimethyl-8-ribityllumazine synthase"/>
    <property type="match status" value="1"/>
</dbReference>
<dbReference type="Gene3D" id="3.40.50.960">
    <property type="entry name" value="Lumazine/riboflavin synthase"/>
    <property type="match status" value="1"/>
</dbReference>
<dbReference type="HAMAP" id="MF_00178">
    <property type="entry name" value="Lumazine_synth"/>
    <property type="match status" value="1"/>
</dbReference>
<dbReference type="InterPro" id="IPR034964">
    <property type="entry name" value="LS"/>
</dbReference>
<dbReference type="InterPro" id="IPR002180">
    <property type="entry name" value="LS/RS"/>
</dbReference>
<dbReference type="InterPro" id="IPR036467">
    <property type="entry name" value="LS/RS_sf"/>
</dbReference>
<dbReference type="NCBIfam" id="TIGR00114">
    <property type="entry name" value="lumazine-synth"/>
    <property type="match status" value="1"/>
</dbReference>
<dbReference type="PANTHER" id="PTHR21058:SF0">
    <property type="entry name" value="6,7-DIMETHYL-8-RIBITYLLUMAZINE SYNTHASE"/>
    <property type="match status" value="1"/>
</dbReference>
<dbReference type="PANTHER" id="PTHR21058">
    <property type="entry name" value="6,7-DIMETHYL-8-RIBITYLLUMAZINE SYNTHASE DMRL SYNTHASE LUMAZINE SYNTHASE"/>
    <property type="match status" value="1"/>
</dbReference>
<dbReference type="Pfam" id="PF00885">
    <property type="entry name" value="DMRL_synthase"/>
    <property type="match status" value="1"/>
</dbReference>
<dbReference type="SUPFAM" id="SSF52121">
    <property type="entry name" value="Lumazine synthase"/>
    <property type="match status" value="1"/>
</dbReference>
<gene>
    <name evidence="1" type="primary">ribH</name>
    <name type="ordered locus">Tpet_1110</name>
</gene>
<reference key="1">
    <citation type="submission" date="2007-05" db="EMBL/GenBank/DDBJ databases">
        <title>Complete sequence of Thermotoga petrophila RKU-1.</title>
        <authorList>
            <consortium name="US DOE Joint Genome Institute"/>
            <person name="Copeland A."/>
            <person name="Lucas S."/>
            <person name="Lapidus A."/>
            <person name="Barry K."/>
            <person name="Glavina del Rio T."/>
            <person name="Dalin E."/>
            <person name="Tice H."/>
            <person name="Pitluck S."/>
            <person name="Sims D."/>
            <person name="Brettin T."/>
            <person name="Bruce D."/>
            <person name="Detter J.C."/>
            <person name="Han C."/>
            <person name="Tapia R."/>
            <person name="Schmutz J."/>
            <person name="Larimer F."/>
            <person name="Land M."/>
            <person name="Hauser L."/>
            <person name="Kyrpides N."/>
            <person name="Mikhailova N."/>
            <person name="Nelson K."/>
            <person name="Gogarten J.P."/>
            <person name="Noll K."/>
            <person name="Richardson P."/>
        </authorList>
    </citation>
    <scope>NUCLEOTIDE SEQUENCE [LARGE SCALE GENOMIC DNA]</scope>
    <source>
        <strain>ATCC BAA-488 / DSM 13995 / JCM 10881 / RKU-1</strain>
    </source>
</reference>
<feature type="chain" id="PRO_1000040539" description="6,7-dimethyl-8-ribityllumazine synthase">
    <location>
        <begin position="1"/>
        <end position="165"/>
    </location>
</feature>
<feature type="active site" description="Proton donor" evidence="1">
    <location>
        <position position="88"/>
    </location>
</feature>
<feature type="binding site" evidence="1">
    <location>
        <position position="22"/>
    </location>
    <ligand>
        <name>5-amino-6-(D-ribitylamino)uracil</name>
        <dbReference type="ChEBI" id="CHEBI:15934"/>
    </ligand>
</feature>
<feature type="binding site" evidence="1">
    <location>
        <begin position="56"/>
        <end position="58"/>
    </location>
    <ligand>
        <name>5-amino-6-(D-ribitylamino)uracil</name>
        <dbReference type="ChEBI" id="CHEBI:15934"/>
    </ligand>
</feature>
<feature type="binding site" evidence="1">
    <location>
        <begin position="80"/>
        <end position="82"/>
    </location>
    <ligand>
        <name>5-amino-6-(D-ribitylamino)uracil</name>
        <dbReference type="ChEBI" id="CHEBI:15934"/>
    </ligand>
</feature>
<feature type="binding site" evidence="1">
    <location>
        <begin position="85"/>
        <end position="86"/>
    </location>
    <ligand>
        <name>(2S)-2-hydroxy-3-oxobutyl phosphate</name>
        <dbReference type="ChEBI" id="CHEBI:58830"/>
    </ligand>
</feature>
<feature type="binding site" evidence="1">
    <location>
        <position position="113"/>
    </location>
    <ligand>
        <name>5-amino-6-(D-ribitylamino)uracil</name>
        <dbReference type="ChEBI" id="CHEBI:15934"/>
    </ligand>
</feature>
<feature type="binding site" evidence="1">
    <location>
        <position position="127"/>
    </location>
    <ligand>
        <name>(2S)-2-hydroxy-3-oxobutyl phosphate</name>
        <dbReference type="ChEBI" id="CHEBI:58830"/>
    </ligand>
</feature>
<proteinExistence type="inferred from homology"/>
<sequence>MKVIQGDYRGEGLKIAVVVPRFNDLVTSKLLEGALDGLKRHGVSDENITVVRIPGSMEAIYTLKKLLDLNVHDAIIVLGAVIRGETYHFNVVANEIGKAVAQFNMTSDIPIVFGVLTTDTLEQALNRAGAKSGNKGFEAAMVAIEMANLRKRLRRDVFESDSNGR</sequence>
<keyword id="KW-0686">Riboflavin biosynthesis</keyword>
<keyword id="KW-0808">Transferase</keyword>